<keyword id="KW-1185">Reference proteome</keyword>
<keyword id="KW-0687">Ribonucleoprotein</keyword>
<keyword id="KW-0689">Ribosomal protein</keyword>
<feature type="chain" id="PRO_0000243839" description="Small ribosomal subunit protein bS16">
    <location>
        <begin position="1"/>
        <end position="145"/>
    </location>
</feature>
<feature type="region of interest" description="Disordered" evidence="2">
    <location>
        <begin position="82"/>
        <end position="145"/>
    </location>
</feature>
<feature type="compositionally biased region" description="Basic and acidic residues" evidence="2">
    <location>
        <begin position="95"/>
        <end position="115"/>
    </location>
</feature>
<feature type="compositionally biased region" description="Low complexity" evidence="2">
    <location>
        <begin position="116"/>
        <end position="137"/>
    </location>
</feature>
<comment type="similarity">
    <text evidence="1">Belongs to the bacterial ribosomal protein bS16 family.</text>
</comment>
<name>RS16_NOVAD</name>
<sequence length="145" mass="15752">MSVSMRLSRGGSKKRPYYKIVVSNSRAPRDGKYLEQVGTYNPLLAKDDENRVRLIEDRVRYWIGVGAQPTDRVARMLDKAGIKERAATNNPQKAEPGKKAKERAEERAEKAREAAEAAAAAAAAPAEEAAAEAPAEAAAEEQTEA</sequence>
<proteinExistence type="inferred from homology"/>
<gene>
    <name evidence="1" type="primary">rpsP</name>
    <name type="ordered locus">Saro_1405</name>
</gene>
<organism>
    <name type="scientific">Novosphingobium aromaticivorans (strain ATCC 700278 / DSM 12444 / CCUG 56034 / CIP 105152 / NBRC 16084 / F199)</name>
    <dbReference type="NCBI Taxonomy" id="279238"/>
    <lineage>
        <taxon>Bacteria</taxon>
        <taxon>Pseudomonadati</taxon>
        <taxon>Pseudomonadota</taxon>
        <taxon>Alphaproteobacteria</taxon>
        <taxon>Sphingomonadales</taxon>
        <taxon>Sphingomonadaceae</taxon>
        <taxon>Novosphingobium</taxon>
    </lineage>
</organism>
<reference key="1">
    <citation type="submission" date="2006-01" db="EMBL/GenBank/DDBJ databases">
        <title>Complete sequence of Novosphingobium aromaticivorans DSM 12444.</title>
        <authorList>
            <consortium name="US DOE Joint Genome Institute"/>
            <person name="Copeland A."/>
            <person name="Lucas S."/>
            <person name="Lapidus A."/>
            <person name="Barry K."/>
            <person name="Detter J.C."/>
            <person name="Glavina T."/>
            <person name="Hammon N."/>
            <person name="Israni S."/>
            <person name="Pitluck S."/>
            <person name="Chain P."/>
            <person name="Malfatti S."/>
            <person name="Shin M."/>
            <person name="Vergez L."/>
            <person name="Schmutz J."/>
            <person name="Larimer F."/>
            <person name="Land M."/>
            <person name="Kyrpides N."/>
            <person name="Ivanova N."/>
            <person name="Fredrickson J."/>
            <person name="Balkwill D."/>
            <person name="Romine M.F."/>
            <person name="Richardson P."/>
        </authorList>
    </citation>
    <scope>NUCLEOTIDE SEQUENCE [LARGE SCALE GENOMIC DNA]</scope>
    <source>
        <strain>ATCC 700278 / DSM 12444 / CCUG 56034 / CIP 105152 / NBRC 16084 / F199</strain>
    </source>
</reference>
<accession>Q2G8H4</accession>
<protein>
    <recommendedName>
        <fullName evidence="1">Small ribosomal subunit protein bS16</fullName>
    </recommendedName>
    <alternativeName>
        <fullName evidence="3">30S ribosomal protein S16</fullName>
    </alternativeName>
</protein>
<dbReference type="EMBL" id="CP000248">
    <property type="protein sequence ID" value="ABD25849.1"/>
    <property type="molecule type" value="Genomic_DNA"/>
</dbReference>
<dbReference type="RefSeq" id="WP_011445063.1">
    <property type="nucleotide sequence ID" value="NC_007794.1"/>
</dbReference>
<dbReference type="SMR" id="Q2G8H4"/>
<dbReference type="STRING" id="279238.Saro_1405"/>
<dbReference type="KEGG" id="nar:Saro_1405"/>
<dbReference type="eggNOG" id="COG0228">
    <property type="taxonomic scope" value="Bacteria"/>
</dbReference>
<dbReference type="HOGENOM" id="CLU_100590_3_1_5"/>
<dbReference type="Proteomes" id="UP000009134">
    <property type="component" value="Chromosome"/>
</dbReference>
<dbReference type="GO" id="GO:0005737">
    <property type="term" value="C:cytoplasm"/>
    <property type="evidence" value="ECO:0007669"/>
    <property type="project" value="UniProtKB-ARBA"/>
</dbReference>
<dbReference type="GO" id="GO:0015935">
    <property type="term" value="C:small ribosomal subunit"/>
    <property type="evidence" value="ECO:0007669"/>
    <property type="project" value="TreeGrafter"/>
</dbReference>
<dbReference type="GO" id="GO:0003735">
    <property type="term" value="F:structural constituent of ribosome"/>
    <property type="evidence" value="ECO:0007669"/>
    <property type="project" value="InterPro"/>
</dbReference>
<dbReference type="GO" id="GO:0006412">
    <property type="term" value="P:translation"/>
    <property type="evidence" value="ECO:0007669"/>
    <property type="project" value="UniProtKB-UniRule"/>
</dbReference>
<dbReference type="Gene3D" id="3.30.1320.10">
    <property type="match status" value="1"/>
</dbReference>
<dbReference type="HAMAP" id="MF_00385">
    <property type="entry name" value="Ribosomal_bS16"/>
    <property type="match status" value="1"/>
</dbReference>
<dbReference type="InterPro" id="IPR000307">
    <property type="entry name" value="Ribosomal_bS16"/>
</dbReference>
<dbReference type="InterPro" id="IPR023803">
    <property type="entry name" value="Ribosomal_bS16_dom_sf"/>
</dbReference>
<dbReference type="NCBIfam" id="TIGR00002">
    <property type="entry name" value="S16"/>
    <property type="match status" value="1"/>
</dbReference>
<dbReference type="PANTHER" id="PTHR12919">
    <property type="entry name" value="30S RIBOSOMAL PROTEIN S16"/>
    <property type="match status" value="1"/>
</dbReference>
<dbReference type="PANTHER" id="PTHR12919:SF20">
    <property type="entry name" value="SMALL RIBOSOMAL SUBUNIT PROTEIN BS16M"/>
    <property type="match status" value="1"/>
</dbReference>
<dbReference type="Pfam" id="PF00886">
    <property type="entry name" value="Ribosomal_S16"/>
    <property type="match status" value="1"/>
</dbReference>
<dbReference type="SUPFAM" id="SSF54565">
    <property type="entry name" value="Ribosomal protein S16"/>
    <property type="match status" value="1"/>
</dbReference>
<evidence type="ECO:0000255" key="1">
    <source>
        <dbReference type="HAMAP-Rule" id="MF_00385"/>
    </source>
</evidence>
<evidence type="ECO:0000256" key="2">
    <source>
        <dbReference type="SAM" id="MobiDB-lite"/>
    </source>
</evidence>
<evidence type="ECO:0000305" key="3"/>